<organismHost>
    <name type="scientific">Mus musculus</name>
    <name type="common">Mouse</name>
    <dbReference type="NCBI Taxonomy" id="10090"/>
</organismHost>
<protein>
    <recommendedName>
        <fullName evidence="1">Pre-protein VI</fullName>
        <shortName evidence="1">pVI</shortName>
    </recommendedName>
    <component>
        <recommendedName>
            <fullName evidence="1">Endosome lysis protein</fullName>
        </recommendedName>
    </component>
    <component>
        <recommendedName>
            <fullName evidence="1">Protease cofactor</fullName>
        </recommendedName>
        <alternativeName>
            <fullName evidence="1">pVI-C</fullName>
        </alternativeName>
    </component>
</protein>
<keyword id="KW-0167">Capsid protein</keyword>
<keyword id="KW-1176">Cytoplasmic inwards viral transport</keyword>
<keyword id="KW-1015">Disulfide bond</keyword>
<keyword id="KW-1035">Host cytoplasm</keyword>
<keyword id="KW-1048">Host nucleus</keyword>
<keyword id="KW-0945">Host-virus interaction</keyword>
<keyword id="KW-0426">Late protein</keyword>
<keyword id="KW-1177">Microtubular inwards viral transport</keyword>
<keyword id="KW-0597">Phosphoprotein</keyword>
<keyword id="KW-0832">Ubl conjugation</keyword>
<keyword id="KW-0118">Viral capsid assembly</keyword>
<keyword id="KW-1162">Viral penetration into host cytoplasm</keyword>
<keyword id="KW-1174">Viral penetration via lysis of host organellar membrane</keyword>
<keyword id="KW-1188">Viral release from host cell</keyword>
<keyword id="KW-0946">Virion</keyword>
<keyword id="KW-1160">Virus entry into host cell</keyword>
<dbReference type="EMBL" id="X74742">
    <property type="protein sequence ID" value="CAA52765.1"/>
    <property type="molecule type" value="Genomic_DNA"/>
</dbReference>
<dbReference type="EMBL" id="M81889">
    <property type="protein sequence ID" value="AAB48186.1"/>
    <property type="molecule type" value="Genomic_DNA"/>
</dbReference>
<dbReference type="PIR" id="PC4015">
    <property type="entry name" value="PC4015"/>
</dbReference>
<dbReference type="PIR" id="S37198">
    <property type="entry name" value="S37198"/>
</dbReference>
<dbReference type="GO" id="GO:0043657">
    <property type="term" value="C:host cell"/>
    <property type="evidence" value="ECO:0007669"/>
    <property type="project" value="GOC"/>
</dbReference>
<dbReference type="GO" id="GO:0030430">
    <property type="term" value="C:host cell cytoplasm"/>
    <property type="evidence" value="ECO:0007669"/>
    <property type="project" value="UniProtKB-SubCell"/>
</dbReference>
<dbReference type="GO" id="GO:0042025">
    <property type="term" value="C:host cell nucleus"/>
    <property type="evidence" value="ECO:0007669"/>
    <property type="project" value="UniProtKB-SubCell"/>
</dbReference>
<dbReference type="GO" id="GO:0019028">
    <property type="term" value="C:viral capsid"/>
    <property type="evidence" value="ECO:0007669"/>
    <property type="project" value="UniProtKB-UniRule"/>
</dbReference>
<dbReference type="GO" id="GO:0046729">
    <property type="term" value="C:viral procapsid"/>
    <property type="evidence" value="ECO:0007669"/>
    <property type="project" value="UniProtKB-UniRule"/>
</dbReference>
<dbReference type="GO" id="GO:0039664">
    <property type="term" value="P:lysis of host organelle involved in viral entry into host cell"/>
    <property type="evidence" value="ECO:0007669"/>
    <property type="project" value="UniProtKB-UniRule"/>
</dbReference>
<dbReference type="GO" id="GO:0075521">
    <property type="term" value="P:microtubule-dependent intracellular transport of viral material towards nucleus"/>
    <property type="evidence" value="ECO:0007669"/>
    <property type="project" value="UniProtKB-UniRule"/>
</dbReference>
<dbReference type="GO" id="GO:0019076">
    <property type="term" value="P:viral release from host cell"/>
    <property type="evidence" value="ECO:0007669"/>
    <property type="project" value="UniProtKB-UniRule"/>
</dbReference>
<dbReference type="HAMAP" id="MF_04048">
    <property type="entry name" value="ADV_CAP6"/>
    <property type="match status" value="1"/>
</dbReference>
<dbReference type="InterPro" id="IPR004243">
    <property type="entry name" value="McpVI"/>
</dbReference>
<dbReference type="Pfam" id="PF02993">
    <property type="entry name" value="MCPVI"/>
    <property type="match status" value="1"/>
</dbReference>
<sequence>MDDPFSTLAPRRGTQPLLSNWATIGISELHGGALGWGSWWSNLSRLGSSFGSNLKNLGLKAWNSSTGQALRQHLKDTNLQHKVVEGLSTGIHGAVDIARQEVDRQLAKRLENYEPPRVASTEETVDDVKTVALPSKEDESERVLVTKIREPPPPYDAVFGPAPSAETNKKQKFEETLQNAGLVSSPPAPIAAPAAIAVPAQTTMSHPASSRRRHHWQGTLDSIMGLGLQPIKRRRCF</sequence>
<proteinExistence type="inferred from homology"/>
<feature type="chain" id="PRO_0000421434" description="Pre-protein VI" evidence="1">
    <location>
        <begin position="1"/>
        <end position="237"/>
    </location>
</feature>
<feature type="propeptide" id="PRO_0000036572" evidence="1">
    <location>
        <begin position="1"/>
        <end position="32"/>
    </location>
</feature>
<feature type="chain" id="PRO_0000036573" description="Endosome lysis protein" evidence="1">
    <location>
        <begin position="33"/>
        <end position="226"/>
    </location>
</feature>
<feature type="chain" id="PRO_0000036574" description="Protease cofactor" evidence="1">
    <location>
        <begin position="227"/>
        <end position="237"/>
    </location>
</feature>
<feature type="region of interest" description="Amphipathic alpha-helix essential for membrane lytic activity" evidence="1">
    <location>
        <begin position="33"/>
        <end position="57"/>
    </location>
</feature>
<feature type="region of interest" description="Involved in endosomal membrane lysis" evidence="1">
    <location>
        <begin position="35"/>
        <end position="56"/>
    </location>
</feature>
<feature type="region of interest" description="Interaction with hexon protein" evidence="1">
    <location>
        <begin position="51"/>
        <end position="77"/>
    </location>
</feature>
<feature type="region of interest" description="Interaction with hexon protein" evidence="1">
    <location>
        <begin position="220"/>
        <end position="226"/>
    </location>
</feature>
<feature type="region of interest" description="Binds to importin alpha/beta, involved in hexon nuclear import" evidence="1">
    <location>
        <begin position="227"/>
        <end position="237"/>
    </location>
</feature>
<feature type="short sequence motif" description="Nuclear export signal" evidence="1">
    <location>
        <begin position="70"/>
        <end position="79"/>
    </location>
</feature>
<feature type="short sequence motif" description="Nuclear export signal" evidence="1">
    <location>
        <begin position="218"/>
        <end position="229"/>
    </location>
</feature>
<feature type="short sequence motif" description="Nuclear localization signal" evidence="1">
    <location>
        <begin position="232"/>
        <end position="235"/>
    </location>
</feature>
<feature type="site" description="Cleavage; by viral protease" evidence="1">
    <location>
        <begin position="32"/>
        <end position="33"/>
    </location>
</feature>
<feature type="site" description="Cleavage; by viral protease" evidence="1">
    <location>
        <begin position="226"/>
        <end position="227"/>
    </location>
</feature>
<feature type="modified residue" description="Phosphothreonine; by host" evidence="1">
    <location>
        <position position="146"/>
    </location>
</feature>
<feature type="disulfide bond" description="Interchain (with Adenovirus protease)" evidence="1">
    <location>
        <position position="236"/>
    </location>
</feature>
<name>CAP6_ADEM1</name>
<reference key="1">
    <citation type="journal article" date="1995" name="Gene">
        <title>Sequence of the mouse adenovirus serotype-1 DNA encoding the precursor to capsid protein VI.</title>
        <authorList>
            <person name="Song B."/>
            <person name="Spindler K.R."/>
            <person name="Young C.S.H."/>
        </authorList>
    </citation>
    <scope>NUCLEOTIDE SEQUENCE [GENOMIC DNA]</scope>
</reference>
<reference key="2">
    <citation type="journal article" date="1994" name="J. Gen. Virol.">
        <title>Sequence and structural analysis of murine adenovirus type 1 hexon.</title>
        <authorList>
            <person name="Weber J.M."/>
            <person name="Cai F."/>
            <person name="Murali R."/>
            <person name="Burnett R.M."/>
        </authorList>
    </citation>
    <scope>NUCLEOTIDE SEQUENCE [GENOMIC DNA] OF 177-237</scope>
    <source>
        <strain>FL</strain>
    </source>
</reference>
<accession>P48310</accession>
<gene>
    <name evidence="1" type="primary">L3</name>
</gene>
<organism>
    <name type="scientific">Murine adenovirus A serotype 1</name>
    <name type="common">MAdV-1</name>
    <name type="synonym">Murine adenovirus 1</name>
    <dbReference type="NCBI Taxonomy" id="10530"/>
    <lineage>
        <taxon>Viruses</taxon>
        <taxon>Varidnaviria</taxon>
        <taxon>Bamfordvirae</taxon>
        <taxon>Preplasmiviricota</taxon>
        <taxon>Tectiliviricetes</taxon>
        <taxon>Rowavirales</taxon>
        <taxon>Adenoviridae</taxon>
        <taxon>Mastadenovirus</taxon>
        <taxon>Murine mastadenovirus A</taxon>
    </lineage>
</organism>
<evidence type="ECO:0000255" key="1">
    <source>
        <dbReference type="HAMAP-Rule" id="MF_04048"/>
    </source>
</evidence>
<comment type="function">
    <molecule>Pre-protein VI</molecule>
    <text evidence="1">During virus assembly, promotes hexon trimers nuclear import through nuclear pore complexes via an importin alpha/beta-dependent mechanism. By analogy to herpesviruses capsid assembly, might act as a chaperone to promote the formation of the icosahedral capsid.</text>
</comment>
<comment type="function">
    <molecule>Endosome lysis protein</molecule>
    <text evidence="1">Structural component of the virion that provides increased stability to the particle shell through its interaction with the core-capsid bridging protein and the hexon-linking protein VIII. Fibers shedding during virus entry into host cell allows the endosome lysis protein to be exposed as a membrane-lytic peptide. Exhibits pH-independent membrane fragmentation activity and probably mediates viral rapid escape from host endosome via organellar membrane lysis. It is not clear if it then remains partially associated with the capsid and involved in the intracellular microtubule-dependent transport of capsid to the nucleus, or if it is lost during endosomal penetration.</text>
</comment>
<comment type="function">
    <molecule>Protease cofactor</molecule>
    <text evidence="1">Cofactor that activates the viral protease. Binds to viral protease in a 1:1 ratio.</text>
</comment>
<comment type="subunit">
    <molecule>Pre-protein VI</molecule>
    <text evidence="1">Interacts with hexon protein; this interaction allows nuclear import of hexon trimers and possibly pre-capsid assembly. Interacts (via C-terminal NLS) with importin alpha/beta.</text>
</comment>
<comment type="subunit">
    <molecule>Endosome lysis protein</molecule>
    <text evidence="1">Interacts (via PPxY motif) with host NEDD4 ubiquitine ligase; this interaction might play a role in virus intracellular transport during entry. Part of a complex composed of the core-capsid bridging protein, the endosome lysis protein VI and the hexon-linking protein VIII; these interactions bridge the virus core to the capsid. Interacts with peripentonal hexons; this interaction stabilizes the capsid by gluing two peripentonal hexons together and joining them with an adjacent group-of-nine hexon.</text>
</comment>
<comment type="subunit">
    <molecule>Protease cofactor</molecule>
    <text evidence="1">Heterodimer with the viral protease; disulfide-linked. Interacts with the viral protease.</text>
</comment>
<comment type="subcellular location">
    <molecule>Pre-protein VI</molecule>
    <subcellularLocation>
        <location evidence="1">Host nucleus</location>
    </subcellularLocation>
    <subcellularLocation>
        <location evidence="1">Host cytoplasm</location>
    </subcellularLocation>
    <text evidence="1">Shuttles between host cytoplasm and nucleus.</text>
</comment>
<comment type="subcellular location">
    <molecule>Endosome lysis protein</molecule>
    <subcellularLocation>
        <location evidence="1">Virion</location>
    </subcellularLocation>
    <text evidence="1">Associates with the base of each peripentonal hexon on the capsid interior. Present in around 360 copies per virion.</text>
</comment>
<comment type="induction">
    <text evidence="1">Expressed in the late phase of the viral replicative cycle.</text>
</comment>
<comment type="domain">
    <text evidence="1">N-terminal amphipathic alpha-helix domain is essential for the membrane lytic activity.</text>
</comment>
<comment type="domain">
    <text evidence="1">Late-budding domains (L domains) are short sequence motifs essential for viral particle release. They can occur individually or in close proximity within structural proteins. They interacts with sorting cellular proteins of the multivesicular body (MVB) pathway. Most of these proteins are class E vacuolar protein sorting factors belonging to ESCRT-I, ESCRT-II or ESCRT-III complexes. Minor capsid protein 6 contains one L domain: a PPXY motif which binds to the WW domains of HECT (homologous to E6-AP C-terminus) E3 ubiquitin ligases, like NEDD4. In adenoviruses, this motif seems to play a role in microtubule-dependent intracellular trafficking toward the nucleus during virus entry into host cell and in suppression of DAXX-mediated repression of the immediate early E1A promoter.</text>
</comment>
<comment type="PTM">
    <text evidence="1">Ubiquitinated by Nedd4 following partial capsid disassembly; which might play a role in intracellular virus movement during entry.</text>
</comment>
<comment type="PTM">
    <molecule>Protease cofactor</molecule>
    <text evidence="1">Contains the major nuclear import and export signals. Proteolytically removed during virion maturation. The processing of the C-terminus turns the precursor into a mature viral structural protein and abrogates its ability to promote hexon import and act as a potential chaperone protein.</text>
</comment>
<comment type="miscellaneous">
    <text evidence="1">All late proteins expressed from the major late promoter are produced by alternative splicing and alternative polyadenylation of the same gene giving rise to non-overlapping ORFs. A leader sequence is present in the N-terminus of all these mRNAs and is recognized by the viral shutoff protein to provide expression although conventional translation via ribosome scanning from the cap has been shut off in the host cell.</text>
</comment>
<comment type="similarity">
    <text evidence="1">Belongs to the adenoviridae protein VI family.</text>
</comment>